<comment type="function">
    <text evidence="3">Probably participates in a plant defense mechanism.</text>
</comment>
<comment type="domain">
    <text evidence="1">The presence of a 'disulfide through disulfide knot' structurally defines this protein as a knottin.</text>
</comment>
<comment type="PTM">
    <text evidence="2">This peptide occurs in both cyclic and linear forms.</text>
</comment>
<comment type="mass spectrometry">
    <text>Cyclic form.</text>
</comment>
<comment type="mass spectrometry">
    <text>Linear form.</text>
</comment>
<comment type="similarity">
    <text evidence="2">Belongs to the cyclotide family. Bracelet subfamily.</text>
</comment>
<dbReference type="SMR" id="P85127"/>
<dbReference type="GO" id="GO:0006952">
    <property type="term" value="P:defense response"/>
    <property type="evidence" value="ECO:0007669"/>
    <property type="project" value="UniProtKB-KW"/>
</dbReference>
<dbReference type="InterPro" id="IPR005535">
    <property type="entry name" value="Cyclotide"/>
</dbReference>
<dbReference type="InterPro" id="IPR012324">
    <property type="entry name" value="Cyclotide_moebius_CS"/>
</dbReference>
<dbReference type="InterPro" id="IPR036146">
    <property type="entry name" value="Cyclotide_sf"/>
</dbReference>
<dbReference type="Pfam" id="PF03784">
    <property type="entry name" value="Cyclotide"/>
    <property type="match status" value="1"/>
</dbReference>
<dbReference type="SUPFAM" id="SSF57038">
    <property type="entry name" value="Cyclotides"/>
    <property type="match status" value="1"/>
</dbReference>
<dbReference type="PROSITE" id="PS60009">
    <property type="entry name" value="CYCLOTIDE_MOEBIUS"/>
    <property type="match status" value="1"/>
</dbReference>
<accession>P85127</accession>
<reference evidence="3" key="1">
    <citation type="journal article" date="2007" name="ChemBioChem">
        <title>The cyclotide fingerprint in Oldenlandia affinis: elucidation of chemically modified, linear and novel macrocyclic peptides.</title>
        <authorList>
            <person name="Plan M.R.R."/>
            <person name="Goeransson U."/>
            <person name="Clark R.J."/>
            <person name="Daly N.L."/>
            <person name="Colgrave M.L."/>
            <person name="Craik D.J."/>
        </authorList>
    </citation>
    <scope>PROTEIN SEQUENCE</scope>
    <scope>MASS SPECTROMETRY</scope>
</reference>
<organism>
    <name type="scientific">Oldenlandia affinis</name>
    <dbReference type="NCBI Taxonomy" id="60225"/>
    <lineage>
        <taxon>Eukaryota</taxon>
        <taxon>Viridiplantae</taxon>
        <taxon>Streptophyta</taxon>
        <taxon>Embryophyta</taxon>
        <taxon>Tracheophyta</taxon>
        <taxon>Spermatophyta</taxon>
        <taxon>Magnoliopsida</taxon>
        <taxon>eudicotyledons</taxon>
        <taxon>Gunneridae</taxon>
        <taxon>Pentapetalae</taxon>
        <taxon>asterids</taxon>
        <taxon>lamiids</taxon>
        <taxon>Gentianales</taxon>
        <taxon>Rubiaceae</taxon>
        <taxon>Rubioideae</taxon>
        <taxon>Spermacoceae</taxon>
        <taxon>Hedyotis-Oldenlandia complex</taxon>
        <taxon>Oldenlandia</taxon>
    </lineage>
</organism>
<protein>
    <recommendedName>
        <fullName>Kalata-B9</fullName>
    </recommendedName>
</protein>
<name>KAB9_OLDAF</name>
<feature type="peptide" id="PRO_0000294956" description="Kalata-B9" evidence="2">
    <location>
        <begin position="1"/>
        <end position="31"/>
    </location>
</feature>
<feature type="disulfide bond" evidence="1">
    <location>
        <begin position="6"/>
        <end position="20"/>
    </location>
</feature>
<feature type="disulfide bond" evidence="1">
    <location>
        <begin position="10"/>
        <end position="22"/>
    </location>
</feature>
<feature type="disulfide bond" evidence="1">
    <location>
        <begin position="15"/>
        <end position="28"/>
    </location>
</feature>
<feature type="cross-link" description="Cyclopeptide (Gly-Asp)" evidence="2">
    <location>
        <begin position="1"/>
        <end position="31"/>
    </location>
</feature>
<evidence type="ECO:0000250" key="1">
    <source>
        <dbReference type="UniProtKB" id="P85175"/>
    </source>
</evidence>
<evidence type="ECO:0000269" key="2">
    <source>
    </source>
</evidence>
<evidence type="ECO:0000305" key="3"/>
<proteinExistence type="evidence at protein level"/>
<sequence>GSVFNCGETCVLGTCYTPGCTCNTYRVCTKD</sequence>
<keyword id="KW-0903">Direct protein sequencing</keyword>
<keyword id="KW-1015">Disulfide bond</keyword>
<keyword id="KW-0960">Knottin</keyword>
<keyword id="KW-0611">Plant defense</keyword>